<gene>
    <name evidence="1" type="primary">rplX</name>
    <name type="ordered locus">NFA_7750</name>
</gene>
<protein>
    <recommendedName>
        <fullName evidence="1">Large ribosomal subunit protein uL24</fullName>
    </recommendedName>
    <alternativeName>
        <fullName evidence="3">50S ribosomal protein L24</fullName>
    </alternativeName>
</protein>
<keyword id="KW-1185">Reference proteome</keyword>
<keyword id="KW-0687">Ribonucleoprotein</keyword>
<keyword id="KW-0689">Ribosomal protein</keyword>
<keyword id="KW-0694">RNA-binding</keyword>
<keyword id="KW-0699">rRNA-binding</keyword>
<organism>
    <name type="scientific">Nocardia farcinica (strain IFM 10152)</name>
    <dbReference type="NCBI Taxonomy" id="247156"/>
    <lineage>
        <taxon>Bacteria</taxon>
        <taxon>Bacillati</taxon>
        <taxon>Actinomycetota</taxon>
        <taxon>Actinomycetes</taxon>
        <taxon>Mycobacteriales</taxon>
        <taxon>Nocardiaceae</taxon>
        <taxon>Nocardia</taxon>
    </lineage>
</organism>
<name>RL24_NOCFA</name>
<dbReference type="EMBL" id="AP006618">
    <property type="protein sequence ID" value="BAD55620.1"/>
    <property type="molecule type" value="Genomic_DNA"/>
</dbReference>
<dbReference type="RefSeq" id="WP_011207306.1">
    <property type="nucleotide sequence ID" value="NC_006361.1"/>
</dbReference>
<dbReference type="SMR" id="Q5Z1S1"/>
<dbReference type="STRING" id="247156.NFA_7750"/>
<dbReference type="GeneID" id="61131607"/>
<dbReference type="KEGG" id="nfa:NFA_7750"/>
<dbReference type="eggNOG" id="COG0198">
    <property type="taxonomic scope" value="Bacteria"/>
</dbReference>
<dbReference type="HOGENOM" id="CLU_093315_2_0_11"/>
<dbReference type="OrthoDB" id="9807419at2"/>
<dbReference type="Proteomes" id="UP000006820">
    <property type="component" value="Chromosome"/>
</dbReference>
<dbReference type="GO" id="GO:1990904">
    <property type="term" value="C:ribonucleoprotein complex"/>
    <property type="evidence" value="ECO:0007669"/>
    <property type="project" value="UniProtKB-KW"/>
</dbReference>
<dbReference type="GO" id="GO:0005840">
    <property type="term" value="C:ribosome"/>
    <property type="evidence" value="ECO:0007669"/>
    <property type="project" value="UniProtKB-KW"/>
</dbReference>
<dbReference type="GO" id="GO:0019843">
    <property type="term" value="F:rRNA binding"/>
    <property type="evidence" value="ECO:0007669"/>
    <property type="project" value="UniProtKB-UniRule"/>
</dbReference>
<dbReference type="GO" id="GO:0003735">
    <property type="term" value="F:structural constituent of ribosome"/>
    <property type="evidence" value="ECO:0007669"/>
    <property type="project" value="InterPro"/>
</dbReference>
<dbReference type="GO" id="GO:0006412">
    <property type="term" value="P:translation"/>
    <property type="evidence" value="ECO:0007669"/>
    <property type="project" value="UniProtKB-UniRule"/>
</dbReference>
<dbReference type="CDD" id="cd06089">
    <property type="entry name" value="KOW_RPL26"/>
    <property type="match status" value="1"/>
</dbReference>
<dbReference type="FunFam" id="2.30.30.30:FF:000004">
    <property type="entry name" value="50S ribosomal protein L24"/>
    <property type="match status" value="1"/>
</dbReference>
<dbReference type="Gene3D" id="2.30.30.30">
    <property type="match status" value="1"/>
</dbReference>
<dbReference type="HAMAP" id="MF_01326_B">
    <property type="entry name" value="Ribosomal_uL24_B"/>
    <property type="match status" value="1"/>
</dbReference>
<dbReference type="InterPro" id="IPR005824">
    <property type="entry name" value="KOW"/>
</dbReference>
<dbReference type="InterPro" id="IPR014722">
    <property type="entry name" value="Rib_uL2_dom2"/>
</dbReference>
<dbReference type="InterPro" id="IPR003256">
    <property type="entry name" value="Ribosomal_uL24"/>
</dbReference>
<dbReference type="InterPro" id="IPR005825">
    <property type="entry name" value="Ribosomal_uL24_CS"/>
</dbReference>
<dbReference type="InterPro" id="IPR041988">
    <property type="entry name" value="Ribosomal_uL24_KOW"/>
</dbReference>
<dbReference type="InterPro" id="IPR008991">
    <property type="entry name" value="Translation_prot_SH3-like_sf"/>
</dbReference>
<dbReference type="NCBIfam" id="TIGR01079">
    <property type="entry name" value="rplX_bact"/>
    <property type="match status" value="1"/>
</dbReference>
<dbReference type="PANTHER" id="PTHR12903">
    <property type="entry name" value="MITOCHONDRIAL RIBOSOMAL PROTEIN L24"/>
    <property type="match status" value="1"/>
</dbReference>
<dbReference type="Pfam" id="PF00467">
    <property type="entry name" value="KOW"/>
    <property type="match status" value="1"/>
</dbReference>
<dbReference type="Pfam" id="PF17136">
    <property type="entry name" value="ribosomal_L24"/>
    <property type="match status" value="1"/>
</dbReference>
<dbReference type="SMART" id="SM00739">
    <property type="entry name" value="KOW"/>
    <property type="match status" value="1"/>
</dbReference>
<dbReference type="SUPFAM" id="SSF50104">
    <property type="entry name" value="Translation proteins SH3-like domain"/>
    <property type="match status" value="1"/>
</dbReference>
<dbReference type="PROSITE" id="PS01108">
    <property type="entry name" value="RIBOSOMAL_L24"/>
    <property type="match status" value="1"/>
</dbReference>
<proteinExistence type="inferred from homology"/>
<reference key="1">
    <citation type="journal article" date="2004" name="Proc. Natl. Acad. Sci. U.S.A.">
        <title>The complete genomic sequence of Nocardia farcinica IFM 10152.</title>
        <authorList>
            <person name="Ishikawa J."/>
            <person name="Yamashita A."/>
            <person name="Mikami Y."/>
            <person name="Hoshino Y."/>
            <person name="Kurita H."/>
            <person name="Hotta K."/>
            <person name="Shiba T."/>
            <person name="Hattori M."/>
        </authorList>
    </citation>
    <scope>NUCLEOTIDE SEQUENCE [LARGE SCALE GENOMIC DNA]</scope>
    <source>
        <strain>IFM 10152</strain>
    </source>
</reference>
<feature type="chain" id="PRO_0000241630" description="Large ribosomal subunit protein uL24">
    <location>
        <begin position="1"/>
        <end position="104"/>
    </location>
</feature>
<feature type="region of interest" description="Disordered" evidence="2">
    <location>
        <begin position="82"/>
        <end position="104"/>
    </location>
</feature>
<feature type="compositionally biased region" description="Basic and acidic residues" evidence="2">
    <location>
        <begin position="82"/>
        <end position="92"/>
    </location>
</feature>
<feature type="compositionally biased region" description="Basic residues" evidence="2">
    <location>
        <begin position="93"/>
        <end position="104"/>
    </location>
</feature>
<accession>Q5Z1S1</accession>
<comment type="function">
    <text evidence="1">One of two assembly initiator proteins, it binds directly to the 5'-end of the 23S rRNA, where it nucleates assembly of the 50S subunit.</text>
</comment>
<comment type="function">
    <text evidence="1">One of the proteins that surrounds the polypeptide exit tunnel on the outside of the subunit.</text>
</comment>
<comment type="subunit">
    <text evidence="1">Part of the 50S ribosomal subunit.</text>
</comment>
<comment type="similarity">
    <text evidence="1">Belongs to the universal ribosomal protein uL24 family.</text>
</comment>
<evidence type="ECO:0000255" key="1">
    <source>
        <dbReference type="HAMAP-Rule" id="MF_01326"/>
    </source>
</evidence>
<evidence type="ECO:0000256" key="2">
    <source>
        <dbReference type="SAM" id="MobiDB-lite"/>
    </source>
</evidence>
<evidence type="ECO:0000305" key="3"/>
<sequence>MKVHKGDTVLVISGKDKGAKGKVIQAYPKENRVLVEGVNRIKKHVANSANQRGASSGGIVTQEAPIHVSNVMVVDSDGKPTRIGYRTDENGKRVRISRRNGKDI</sequence>